<evidence type="ECO:0000305" key="1"/>
<sequence>MSMFLLPVYNIPPAKGFLKKVQTRDCNFNIQLKIFCCLATNQVVSSLDFNQLDCIMGHESTFYTCRAVRRLLLGSNWYPFIDTLNESATGTRGPMYNGPGLIINNTDSTYKLTNICSNKYLPIVYSLETTDMPHEPLAYRAIYFPDLEQTPIDYMCMFKIICRYVTMSELEECYEYFLATVSPPFVNTCKKNYLRLVSALKTLPSTVLATPNPPDQLEFFKFSILSFMQEWSLNSLLNTTKKKIIAAVHSHPHIVIKLCSQNAFKEIKITDANFIEMQQTVNHVMPNFHAEITKRDPGSRPLKVSVLLPDGVKWVIYPPSLPIYRVTMCLASVAAVSSDTITSDKQDIRTASALVSIFRKINYAPKDKKKDMVLNSKVALDIFRNYIAQKYTEEDEFMTYRPIHRLGINNFKVNVFNTNMVINTKIFTHSVPWTYKSLMDIPRLTKNFVFKKYSVKEPSFTVSVFYCENMCNGAAININISGDLLTFLHAMGNMKCYMPIKNILPVSLSNWNSTLDLHGLENQSIVRTGRRDVFWTTNFPSAVSTKLGFNVSWFKAATATISKIYGTSLTSHVTKEVSPIISNNSARLSLLKNNLFSVLESRNRSQIQTLHKRMLECLVALCSFLRLDSHTVRRLAQKGMFDFSKKTISHAKNKHDCALLGYKKCNMIPKVLSFNKKTRLDEHGRNANFLAFISATGFHVPKIRAKLIKHVLRTLGLHWRRTYKHVYNTAQ</sequence>
<protein>
    <recommendedName>
        <fullName>Gene 24 protein</fullName>
    </recommendedName>
</protein>
<comment type="similarity">
    <text evidence="1">Belongs to the herpesviridae UL87 family.</text>
</comment>
<proteinExistence type="inferred from homology"/>
<organismHost>
    <name type="scientific">Saimiri sciureus</name>
    <name type="common">Common squirrel monkey</name>
    <dbReference type="NCBI Taxonomy" id="9521"/>
</organismHost>
<dbReference type="EMBL" id="X64346">
    <property type="protein sequence ID" value="CAA45647.1"/>
    <property type="molecule type" value="Genomic_DNA"/>
</dbReference>
<dbReference type="RefSeq" id="NP_040226.1">
    <property type="nucleotide sequence ID" value="NC_001350.1"/>
</dbReference>
<dbReference type="KEGG" id="vg:1682454"/>
<dbReference type="Proteomes" id="UP000000587">
    <property type="component" value="Segment"/>
</dbReference>
<dbReference type="InterPro" id="IPR004285">
    <property type="entry name" value="Herpes_UL87_C"/>
</dbReference>
<dbReference type="Pfam" id="PF03043">
    <property type="entry name" value="Herpes_UL87"/>
    <property type="match status" value="1"/>
</dbReference>
<organism>
    <name type="scientific">Saimiriine herpesvirus 2 (strain 11)</name>
    <name type="common">SaHV-2</name>
    <name type="synonym">Herpesvirus saimiri</name>
    <dbReference type="NCBI Taxonomy" id="10383"/>
    <lineage>
        <taxon>Viruses</taxon>
        <taxon>Duplodnaviria</taxon>
        <taxon>Heunggongvirae</taxon>
        <taxon>Peploviricota</taxon>
        <taxon>Herviviricetes</taxon>
        <taxon>Herpesvirales</taxon>
        <taxon>Orthoherpesviridae</taxon>
        <taxon>Gammaherpesvirinae</taxon>
        <taxon>Rhadinovirus</taxon>
        <taxon>Rhadinovirus saimiriinegamma2</taxon>
        <taxon>Saimiriine herpesvirus 2</taxon>
    </lineage>
</organism>
<accession>Q01007</accession>
<feature type="chain" id="PRO_0000116230" description="Gene 24 protein">
    <location>
        <begin position="1"/>
        <end position="731"/>
    </location>
</feature>
<reference key="1">
    <citation type="journal article" date="1992" name="J. Virol.">
        <title>Primary structure of the herpesvirus saimiri genome.</title>
        <authorList>
            <person name="Albrecht J.-C."/>
            <person name="Nicholas J."/>
            <person name="Biller D."/>
            <person name="Cameron K.R."/>
            <person name="Biesinger B."/>
            <person name="Newman C."/>
            <person name="Wittmann S."/>
            <person name="Craxton M.A."/>
            <person name="Coleman H."/>
            <person name="Fleckenstein B."/>
            <person name="Honess R.W."/>
        </authorList>
    </citation>
    <scope>NUCLEOTIDE SEQUENCE [LARGE SCALE GENOMIC DNA]</scope>
</reference>
<name>UL87_SHV21</name>
<gene>
    <name type="primary">24</name>
</gene>
<keyword id="KW-1185">Reference proteome</keyword>